<organism>
    <name type="scientific">Moorella thermoacetica (strain ATCC 39073 / JCM 9320)</name>
    <dbReference type="NCBI Taxonomy" id="264732"/>
    <lineage>
        <taxon>Bacteria</taxon>
        <taxon>Bacillati</taxon>
        <taxon>Bacillota</taxon>
        <taxon>Clostridia</taxon>
        <taxon>Moorellales</taxon>
        <taxon>Moorellaceae</taxon>
        <taxon>Moorella</taxon>
    </lineage>
</organism>
<protein>
    <recommendedName>
        <fullName evidence="3">Oxalate oxidoreductase subunit beta</fullName>
        <shortName evidence="3">OOR subunit beta</shortName>
        <ecNumber evidence="2">1.2.7.10</ecNumber>
    </recommendedName>
</protein>
<dbReference type="EC" id="1.2.7.10" evidence="2"/>
<dbReference type="EMBL" id="CP000232">
    <property type="protein sequence ID" value="ABC19897.1"/>
    <property type="molecule type" value="Genomic_DNA"/>
</dbReference>
<dbReference type="RefSeq" id="YP_430440.1">
    <property type="nucleotide sequence ID" value="NC_007644.1"/>
</dbReference>
<dbReference type="PDB" id="5C4I">
    <property type="method" value="X-ray"/>
    <property type="resolution" value="2.27 A"/>
    <property type="chains" value="C/F=1-314"/>
</dbReference>
<dbReference type="PDB" id="5EXD">
    <property type="method" value="X-ray"/>
    <property type="resolution" value="2.50 A"/>
    <property type="chains" value="C/F/I/L=1-314"/>
</dbReference>
<dbReference type="PDB" id="5EXE">
    <property type="method" value="X-ray"/>
    <property type="resolution" value="1.88 A"/>
    <property type="chains" value="C/F=1-314"/>
</dbReference>
<dbReference type="PDBsum" id="5C4I"/>
<dbReference type="PDBsum" id="5EXD"/>
<dbReference type="PDBsum" id="5EXE"/>
<dbReference type="SMR" id="Q2RI42"/>
<dbReference type="STRING" id="264732.Moth_1591"/>
<dbReference type="EnsemblBacteria" id="ABC19897">
    <property type="protein sequence ID" value="ABC19897"/>
    <property type="gene ID" value="Moth_1591"/>
</dbReference>
<dbReference type="KEGG" id="mta:Moth_1591"/>
<dbReference type="PATRIC" id="fig|264732.11.peg.1721"/>
<dbReference type="eggNOG" id="COG1013">
    <property type="taxonomic scope" value="Bacteria"/>
</dbReference>
<dbReference type="HOGENOM" id="CLU_058423_0_0_9"/>
<dbReference type="OrthoDB" id="9794954at2"/>
<dbReference type="BioCyc" id="MetaCyc:MONOMER-16174"/>
<dbReference type="EvolutionaryTrace" id="Q2RI42"/>
<dbReference type="GO" id="GO:0051539">
    <property type="term" value="F:4 iron, 4 sulfur cluster binding"/>
    <property type="evidence" value="ECO:0000304"/>
    <property type="project" value="UniProtKB"/>
</dbReference>
<dbReference type="GO" id="GO:0046872">
    <property type="term" value="F:metal ion binding"/>
    <property type="evidence" value="ECO:0007669"/>
    <property type="project" value="UniProtKB-KW"/>
</dbReference>
<dbReference type="GO" id="GO:0016625">
    <property type="term" value="F:oxidoreductase activity, acting on the aldehyde or oxo group of donors, iron-sulfur protein as acceptor"/>
    <property type="evidence" value="ECO:0000314"/>
    <property type="project" value="UniProtKB"/>
</dbReference>
<dbReference type="GO" id="GO:0030976">
    <property type="term" value="F:thiamine pyrophosphate binding"/>
    <property type="evidence" value="ECO:0007669"/>
    <property type="project" value="InterPro"/>
</dbReference>
<dbReference type="GO" id="GO:0033611">
    <property type="term" value="P:oxalate catabolic process"/>
    <property type="evidence" value="ECO:0000314"/>
    <property type="project" value="UniProtKB"/>
</dbReference>
<dbReference type="CDD" id="cd03376">
    <property type="entry name" value="TPP_PFOR_porB_like"/>
    <property type="match status" value="1"/>
</dbReference>
<dbReference type="FunFam" id="3.40.50.970:FF:000113">
    <property type="entry name" value="Oxalate oxidoreductase subunit beta"/>
    <property type="match status" value="1"/>
</dbReference>
<dbReference type="Gene3D" id="3.40.50.970">
    <property type="match status" value="1"/>
</dbReference>
<dbReference type="InterPro" id="IPR054952">
    <property type="entry name" value="OxalOxred_beta"/>
</dbReference>
<dbReference type="InterPro" id="IPR051479">
    <property type="entry name" value="PorB-like"/>
</dbReference>
<dbReference type="InterPro" id="IPR029061">
    <property type="entry name" value="THDP-binding"/>
</dbReference>
<dbReference type="InterPro" id="IPR011766">
    <property type="entry name" value="TPP_enzyme_TPP-bd"/>
</dbReference>
<dbReference type="NCBIfam" id="NF045792">
    <property type="entry name" value="OxalOxredbeta"/>
    <property type="match status" value="1"/>
</dbReference>
<dbReference type="PANTHER" id="PTHR42897">
    <property type="entry name" value="PYRUVATE SYNTHASE SUBUNIT PORB"/>
    <property type="match status" value="1"/>
</dbReference>
<dbReference type="PANTHER" id="PTHR42897:SF2">
    <property type="entry name" value="PYRUVATE SYNTHASE SUBUNIT PORB"/>
    <property type="match status" value="1"/>
</dbReference>
<dbReference type="Pfam" id="PF02775">
    <property type="entry name" value="TPP_enzyme_C"/>
    <property type="match status" value="1"/>
</dbReference>
<dbReference type="SUPFAM" id="SSF52518">
    <property type="entry name" value="Thiamin diphosphate-binding fold (THDP-binding)"/>
    <property type="match status" value="1"/>
</dbReference>
<comment type="function">
    <text evidence="2">Catalyzes the anaerobic oxidation of oxalate using a broad range of electron acceptors, including ferredoxin and the nickel-dependent carbon monoxide dehydrogenase. Does not require coenzyme A as cosubstrate. Enables anaerobic growth on oxalate which is used as energy source by the bacteria.</text>
</comment>
<comment type="catalytic activity">
    <reaction evidence="2">
        <text>oxidized 2[4Fe-4S]-[ferredoxin] + oxalate = reduced 2[4Fe-4S]-[ferredoxin] + 2 CO2</text>
        <dbReference type="Rhea" id="RHEA:30179"/>
        <dbReference type="Rhea" id="RHEA-COMP:10002"/>
        <dbReference type="Rhea" id="RHEA-COMP:10004"/>
        <dbReference type="ChEBI" id="CHEBI:16526"/>
        <dbReference type="ChEBI" id="CHEBI:30623"/>
        <dbReference type="ChEBI" id="CHEBI:33722"/>
        <dbReference type="ChEBI" id="CHEBI:33723"/>
        <dbReference type="EC" id="1.2.7.10"/>
    </reaction>
</comment>
<comment type="cofactor">
    <cofactor evidence="1">
        <name>[4Fe-4S] cluster</name>
        <dbReference type="ChEBI" id="CHEBI:49883"/>
    </cofactor>
    <text evidence="1">Binds 1 [4Fe-4S] cluster per subunit.</text>
</comment>
<comment type="biophysicochemical properties">
    <kinetics>
        <KM evidence="2">58 uM for oxalate</KM>
        <text evidence="2">Kinetic parameters determined with the heterodimer oxalate oxidoreductase complex.</text>
    </kinetics>
    <phDependence>
        <text evidence="2">Optimum pH is 8.7.</text>
    </phDependence>
</comment>
<comment type="subunit">
    <text evidence="2">Dimer of heterotrimer of one alpha, one beta and one delta subunit.</text>
</comment>
<gene>
    <name evidence="4" type="ordered locus">Moth_1591</name>
</gene>
<name>OORB_MOOTA</name>
<reference key="1">
    <citation type="journal article" date="2008" name="Environ. Microbiol.">
        <title>The complete genome sequence of Moorella thermoacetica (f. Clostridium thermoaceticum).</title>
        <authorList>
            <person name="Pierce E."/>
            <person name="Xie G."/>
            <person name="Barabote R.D."/>
            <person name="Saunders E."/>
            <person name="Han C.S."/>
            <person name="Detter J.C."/>
            <person name="Richardson P."/>
            <person name="Brettin T.S."/>
            <person name="Das A."/>
            <person name="Ljungdahl L.G."/>
            <person name="Ragsdale S.W."/>
        </authorList>
    </citation>
    <scope>NUCLEOTIDE SEQUENCE [LARGE SCALE GENOMIC DNA]</scope>
    <source>
        <strain>ATCC 39073 / JCM 9320</strain>
    </source>
</reference>
<reference key="2">
    <citation type="journal article" date="2010" name="J. Biol. Chem.">
        <title>Identification and characterization of oxalate oxidoreductase, a novel thiamine pyrophosphate-dependent 2-oxoacid oxidoreductase that enables anaerobic growth on oxalate.</title>
        <authorList>
            <person name="Pierce E."/>
            <person name="Becker D.F."/>
            <person name="Ragsdale S.W."/>
        </authorList>
    </citation>
    <scope>IDENTIFICATION BY MASS SPECTROMETRY</scope>
    <scope>FUNCTION</scope>
    <scope>CATALYTIC ACTIVITY</scope>
    <scope>COFACTOR</scope>
    <scope>BIOPHYSICOCHEMICAL PROPERTIES</scope>
    <scope>SUBUNIT</scope>
</reference>
<keyword id="KW-0002">3D-structure</keyword>
<keyword id="KW-0004">4Fe-4S</keyword>
<keyword id="KW-0408">Iron</keyword>
<keyword id="KW-0411">Iron-sulfur</keyword>
<keyword id="KW-0479">Metal-binding</keyword>
<keyword id="KW-0560">Oxidoreductase</keyword>
<evidence type="ECO:0000250" key="1">
    <source>
        <dbReference type="UniProtKB" id="P94692"/>
    </source>
</evidence>
<evidence type="ECO:0000269" key="2">
    <source>
    </source>
</evidence>
<evidence type="ECO:0000303" key="3">
    <source>
    </source>
</evidence>
<evidence type="ECO:0000312" key="4">
    <source>
        <dbReference type="EMBL" id="ABC19897.1"/>
    </source>
</evidence>
<evidence type="ECO:0007829" key="5">
    <source>
        <dbReference type="PDB" id="5C4I"/>
    </source>
</evidence>
<evidence type="ECO:0007829" key="6">
    <source>
        <dbReference type="PDB" id="5EXE"/>
    </source>
</evidence>
<accession>Q2RI42</accession>
<feature type="chain" id="PRO_0000430798" description="Oxalate oxidoreductase subunit beta">
    <location>
        <begin position="1"/>
        <end position="314"/>
    </location>
</feature>
<feature type="binding site" evidence="1">
    <location>
        <position position="24"/>
    </location>
    <ligand>
        <name>[4Fe-4S] cluster</name>
        <dbReference type="ChEBI" id="CHEBI:49883"/>
    </ligand>
</feature>
<feature type="binding site" evidence="1">
    <location>
        <position position="27"/>
    </location>
    <ligand>
        <name>[4Fe-4S] cluster</name>
        <dbReference type="ChEBI" id="CHEBI:49883"/>
    </ligand>
</feature>
<feature type="binding site" evidence="1">
    <location>
        <position position="52"/>
    </location>
    <ligand>
        <name>[4Fe-4S] cluster</name>
        <dbReference type="ChEBI" id="CHEBI:49883"/>
    </ligand>
</feature>
<feature type="binding site" evidence="1">
    <location>
        <position position="225"/>
    </location>
    <ligand>
        <name>[4Fe-4S] cluster</name>
        <dbReference type="ChEBI" id="CHEBI:49883"/>
    </ligand>
</feature>
<feature type="helix" evidence="6">
    <location>
        <begin position="28"/>
        <end position="40"/>
    </location>
</feature>
<feature type="strand" evidence="6">
    <location>
        <begin position="42"/>
        <end position="51"/>
    </location>
</feature>
<feature type="helix" evidence="6">
    <location>
        <begin position="52"/>
        <end position="58"/>
    </location>
</feature>
<feature type="turn" evidence="6">
    <location>
        <begin position="59"/>
        <end position="61"/>
    </location>
</feature>
<feature type="strand" evidence="6">
    <location>
        <begin position="65"/>
        <end position="67"/>
    </location>
</feature>
<feature type="strand" evidence="6">
    <location>
        <begin position="69"/>
        <end position="72"/>
    </location>
</feature>
<feature type="helix" evidence="6">
    <location>
        <begin position="77"/>
        <end position="93"/>
    </location>
</feature>
<feature type="strand" evidence="6">
    <location>
        <begin position="103"/>
        <end position="110"/>
    </location>
</feature>
<feature type="helix" evidence="6">
    <location>
        <begin position="111"/>
        <end position="114"/>
    </location>
</feature>
<feature type="helix" evidence="6">
    <location>
        <begin position="118"/>
        <end position="127"/>
    </location>
</feature>
<feature type="strand" evidence="6">
    <location>
        <begin position="132"/>
        <end position="137"/>
    </location>
</feature>
<feature type="strand" evidence="6">
    <location>
        <begin position="139"/>
        <end position="141"/>
    </location>
</feature>
<feature type="turn" evidence="6">
    <location>
        <begin position="142"/>
        <end position="145"/>
    </location>
</feature>
<feature type="strand" evidence="5">
    <location>
        <begin position="159"/>
        <end position="161"/>
    </location>
</feature>
<feature type="strand" evidence="6">
    <location>
        <begin position="165"/>
        <end position="167"/>
    </location>
</feature>
<feature type="helix" evidence="6">
    <location>
        <begin position="178"/>
        <end position="183"/>
    </location>
</feature>
<feature type="strand" evidence="6">
    <location>
        <begin position="191"/>
        <end position="196"/>
    </location>
</feature>
<feature type="helix" evidence="6">
    <location>
        <begin position="200"/>
        <end position="212"/>
    </location>
</feature>
<feature type="strand" evidence="6">
    <location>
        <begin position="213"/>
        <end position="215"/>
    </location>
</feature>
<feature type="strand" evidence="6">
    <location>
        <begin position="217"/>
        <end position="222"/>
    </location>
</feature>
<feature type="helix" evidence="6">
    <location>
        <begin position="226"/>
        <end position="229"/>
    </location>
</feature>
<feature type="helix" evidence="6">
    <location>
        <begin position="233"/>
        <end position="235"/>
    </location>
</feature>
<feature type="helix" evidence="6">
    <location>
        <begin position="236"/>
        <end position="245"/>
    </location>
</feature>
<feature type="strand" evidence="6">
    <location>
        <begin position="252"/>
        <end position="255"/>
    </location>
</feature>
<feature type="strand" evidence="6">
    <location>
        <begin position="258"/>
        <end position="263"/>
    </location>
</feature>
<feature type="strand" evidence="6">
    <location>
        <begin position="266"/>
        <end position="268"/>
    </location>
</feature>
<feature type="helix" evidence="6">
    <location>
        <begin position="272"/>
        <end position="275"/>
    </location>
</feature>
<feature type="helix" evidence="6">
    <location>
        <begin position="279"/>
        <end position="281"/>
    </location>
</feature>
<feature type="helix" evidence="6">
    <location>
        <begin position="286"/>
        <end position="302"/>
    </location>
</feature>
<proteinExistence type="evidence at protein level"/>
<sequence length="314" mass="34234">MLDRIASIKKAPDEEYYVPGHRTCAGCGPALTYRLVAKAAGPNTIFIGPTGCMYVANTSYGCGPWRVPWIHAQITNGGAVASGIEAAYKAMIRKKKTDAEFPNIIVMAGDGGAVDIGLQALSAMLYRGHDVLFICYDNESYANTGIQTSPTTPYGANTTFTPPGEVVPEGKKLFPKDNPKVIAHGHPELKYVATASIGWPVDLMNKVRKGLNQEGPAYIHIHAPCPKGWQFPADKTIEMAKLAVQTGMFQLYEYENGEYKLSVKVDKRKPVSEYMKLQKRFAHLKPEHIAKMQAFVDARCAEVGITVPVVASNA</sequence>